<gene>
    <name type="ordered locus">At3g58975</name>
    <name type="ORF">F17J16.30</name>
</gene>
<organism>
    <name type="scientific">Arabidopsis thaliana</name>
    <name type="common">Mouse-ear cress</name>
    <dbReference type="NCBI Taxonomy" id="3702"/>
    <lineage>
        <taxon>Eukaryota</taxon>
        <taxon>Viridiplantae</taxon>
        <taxon>Streptophyta</taxon>
        <taxon>Embryophyta</taxon>
        <taxon>Tracheophyta</taxon>
        <taxon>Spermatophyta</taxon>
        <taxon>Magnoliopsida</taxon>
        <taxon>eudicotyledons</taxon>
        <taxon>Gunneridae</taxon>
        <taxon>Pentapetalae</taxon>
        <taxon>rosids</taxon>
        <taxon>malvids</taxon>
        <taxon>Brassicales</taxon>
        <taxon>Brassicaceae</taxon>
        <taxon>Camelineae</taxon>
        <taxon>Arabidopsis</taxon>
    </lineage>
</organism>
<proteinExistence type="evidence at transcript level"/>
<reference key="1">
    <citation type="journal article" date="2000" name="Nature">
        <title>Sequence and analysis of chromosome 3 of the plant Arabidopsis thaliana.</title>
        <authorList>
            <person name="Salanoubat M."/>
            <person name="Lemcke K."/>
            <person name="Rieger M."/>
            <person name="Ansorge W."/>
            <person name="Unseld M."/>
            <person name="Fartmann B."/>
            <person name="Valle G."/>
            <person name="Bloecker H."/>
            <person name="Perez-Alonso M."/>
            <person name="Obermaier B."/>
            <person name="Delseny M."/>
            <person name="Boutry M."/>
            <person name="Grivell L.A."/>
            <person name="Mache R."/>
            <person name="Puigdomenech P."/>
            <person name="De Simone V."/>
            <person name="Choisne N."/>
            <person name="Artiguenave F."/>
            <person name="Robert C."/>
            <person name="Brottier P."/>
            <person name="Wincker P."/>
            <person name="Cattolico L."/>
            <person name="Weissenbach J."/>
            <person name="Saurin W."/>
            <person name="Quetier F."/>
            <person name="Schaefer M."/>
            <person name="Mueller-Auer S."/>
            <person name="Gabel C."/>
            <person name="Fuchs M."/>
            <person name="Benes V."/>
            <person name="Wurmbach E."/>
            <person name="Drzonek H."/>
            <person name="Erfle H."/>
            <person name="Jordan N."/>
            <person name="Bangert S."/>
            <person name="Wiedelmann R."/>
            <person name="Kranz H."/>
            <person name="Voss H."/>
            <person name="Holland R."/>
            <person name="Brandt P."/>
            <person name="Nyakatura G."/>
            <person name="Vezzi A."/>
            <person name="D'Angelo M."/>
            <person name="Pallavicini A."/>
            <person name="Toppo S."/>
            <person name="Simionati B."/>
            <person name="Conrad A."/>
            <person name="Hornischer K."/>
            <person name="Kauer G."/>
            <person name="Loehnert T.-H."/>
            <person name="Nordsiek G."/>
            <person name="Reichelt J."/>
            <person name="Scharfe M."/>
            <person name="Schoen O."/>
            <person name="Bargues M."/>
            <person name="Terol J."/>
            <person name="Climent J."/>
            <person name="Navarro P."/>
            <person name="Collado C."/>
            <person name="Perez-Perez A."/>
            <person name="Ottenwaelder B."/>
            <person name="Duchemin D."/>
            <person name="Cooke R."/>
            <person name="Laudie M."/>
            <person name="Berger-Llauro C."/>
            <person name="Purnelle B."/>
            <person name="Masuy D."/>
            <person name="de Haan M."/>
            <person name="Maarse A.C."/>
            <person name="Alcaraz J.-P."/>
            <person name="Cottet A."/>
            <person name="Casacuberta E."/>
            <person name="Monfort A."/>
            <person name="Argiriou A."/>
            <person name="Flores M."/>
            <person name="Liguori R."/>
            <person name="Vitale D."/>
            <person name="Mannhaupt G."/>
            <person name="Haase D."/>
            <person name="Schoof H."/>
            <person name="Rudd S."/>
            <person name="Zaccaria P."/>
            <person name="Mewes H.-W."/>
            <person name="Mayer K.F.X."/>
            <person name="Kaul S."/>
            <person name="Town C.D."/>
            <person name="Koo H.L."/>
            <person name="Tallon L.J."/>
            <person name="Jenkins J."/>
            <person name="Rooney T."/>
            <person name="Rizzo M."/>
            <person name="Walts A."/>
            <person name="Utterback T."/>
            <person name="Fujii C.Y."/>
            <person name="Shea T.P."/>
            <person name="Creasy T.H."/>
            <person name="Haas B."/>
            <person name="Maiti R."/>
            <person name="Wu D."/>
            <person name="Peterson J."/>
            <person name="Van Aken S."/>
            <person name="Pai G."/>
            <person name="Militscher J."/>
            <person name="Sellers P."/>
            <person name="Gill J.E."/>
            <person name="Feldblyum T.V."/>
            <person name="Preuss D."/>
            <person name="Lin X."/>
            <person name="Nierman W.C."/>
            <person name="Salzberg S.L."/>
            <person name="White O."/>
            <person name="Venter J.C."/>
            <person name="Fraser C.M."/>
            <person name="Kaneko T."/>
            <person name="Nakamura Y."/>
            <person name="Sato S."/>
            <person name="Kato T."/>
            <person name="Asamizu E."/>
            <person name="Sasamoto S."/>
            <person name="Kimura T."/>
            <person name="Idesawa K."/>
            <person name="Kawashima K."/>
            <person name="Kishida Y."/>
            <person name="Kiyokawa C."/>
            <person name="Kohara M."/>
            <person name="Matsumoto M."/>
            <person name="Matsuno A."/>
            <person name="Muraki A."/>
            <person name="Nakayama S."/>
            <person name="Nakazaki N."/>
            <person name="Shinpo S."/>
            <person name="Takeuchi C."/>
            <person name="Wada T."/>
            <person name="Watanabe A."/>
            <person name="Yamada M."/>
            <person name="Yasuda M."/>
            <person name="Tabata S."/>
        </authorList>
    </citation>
    <scope>NUCLEOTIDE SEQUENCE [LARGE SCALE GENOMIC DNA]</scope>
    <source>
        <strain>cv. Columbia</strain>
    </source>
</reference>
<reference key="2">
    <citation type="journal article" date="2017" name="Plant J.">
        <title>Araport11: a complete reannotation of the Arabidopsis thaliana reference genome.</title>
        <authorList>
            <person name="Cheng C.Y."/>
            <person name="Krishnakumar V."/>
            <person name="Chan A.P."/>
            <person name="Thibaud-Nissen F."/>
            <person name="Schobel S."/>
            <person name="Town C.D."/>
        </authorList>
    </citation>
    <scope>GENOME REANNOTATION</scope>
    <source>
        <strain>cv. Columbia</strain>
    </source>
</reference>
<reference key="3">
    <citation type="journal article" date="2002" name="Science">
        <title>Functional annotation of a full-length Arabidopsis cDNA collection.</title>
        <authorList>
            <person name="Seki M."/>
            <person name="Narusaka M."/>
            <person name="Kamiya A."/>
            <person name="Ishida J."/>
            <person name="Satou M."/>
            <person name="Sakurai T."/>
            <person name="Nakajima M."/>
            <person name="Enju A."/>
            <person name="Akiyama K."/>
            <person name="Oono Y."/>
            <person name="Muramatsu M."/>
            <person name="Hayashizaki Y."/>
            <person name="Kawai J."/>
            <person name="Carninci P."/>
            <person name="Itoh M."/>
            <person name="Ishii Y."/>
            <person name="Arakawa T."/>
            <person name="Shibata K."/>
            <person name="Shinagawa A."/>
            <person name="Shinozaki K."/>
        </authorList>
    </citation>
    <scope>NUCLEOTIDE SEQUENCE [LARGE SCALE MRNA]</scope>
    <source>
        <strain>cv. Columbia</strain>
    </source>
</reference>
<protein>
    <recommendedName>
        <fullName>FBD domain-containing protein At3g58975</fullName>
    </recommendedName>
</protein>
<sequence length="215" mass="24808">MKALFEARINFIVTEKQIKRVRAPNEDWLQDDEVDVVLRFSNVVKLMNGIQNVQKLYLTADTIEVLSLCCESVPLFNNLKTLGITSEEGRGWQAMPVLGLLHYMTDKCGDACDCISREDKGRSLTSCPVKKLEIRGFRGTMKEMTMIKHFLVYFPCLKEMNIYVEEYDPTELRFPQVSKVIIQMMEEYNKLSSCNVQLLITDYLSEKWTAAGRIL</sequence>
<accession>Q8GYA8</accession>
<accession>Q9LYT8</accession>
<feature type="chain" id="PRO_0000274942" description="FBD domain-containing protein At3g58975">
    <location>
        <begin position="1"/>
        <end position="215"/>
    </location>
</feature>
<feature type="domain" description="FBD">
    <location>
        <begin position="122"/>
        <end position="199"/>
    </location>
</feature>
<dbReference type="EMBL" id="AL163527">
    <property type="protein sequence ID" value="CAB86926.1"/>
    <property type="status" value="ALT_SEQ"/>
    <property type="molecule type" value="Genomic_DNA"/>
</dbReference>
<dbReference type="EMBL" id="CP002686">
    <property type="status" value="NOT_ANNOTATED_CDS"/>
    <property type="molecule type" value="Genomic_DNA"/>
</dbReference>
<dbReference type="EMBL" id="AK117757">
    <property type="protein sequence ID" value="BAC42405.1"/>
    <property type="molecule type" value="mRNA"/>
</dbReference>
<dbReference type="PIR" id="T47780">
    <property type="entry name" value="T47780"/>
</dbReference>
<dbReference type="PeptideAtlas" id="Q8GYA8"/>
<dbReference type="Araport" id="AT3G58975"/>
<dbReference type="TAIR" id="AT3G58975"/>
<dbReference type="InParanoid" id="Q8GYA8"/>
<dbReference type="PRO" id="PR:Q8GYA8"/>
<dbReference type="Proteomes" id="UP000006548">
    <property type="component" value="Chromosome 3"/>
</dbReference>
<dbReference type="ExpressionAtlas" id="Q8GYA8">
    <property type="expression patterns" value="baseline and differential"/>
</dbReference>
<dbReference type="InterPro" id="IPR006566">
    <property type="entry name" value="FBD"/>
</dbReference>
<dbReference type="InterPro" id="IPR055294">
    <property type="entry name" value="FBL60-like"/>
</dbReference>
<dbReference type="PANTHER" id="PTHR31293">
    <property type="entry name" value="RNI-LIKE SUPERFAMILY PROTEIN"/>
    <property type="match status" value="1"/>
</dbReference>
<dbReference type="PANTHER" id="PTHR31293:SF16">
    <property type="entry name" value="RNI-LIKE SUPERFAMILY PROTEIN"/>
    <property type="match status" value="1"/>
</dbReference>
<dbReference type="SMART" id="SM00579">
    <property type="entry name" value="FBD"/>
    <property type="match status" value="1"/>
</dbReference>
<comment type="sequence caution" evidence="1">
    <conflict type="erroneous gene model prediction">
        <sequence resource="EMBL-CDS" id="CAB86926"/>
    </conflict>
    <text>The predicted gene At3g58980 has been split into 2 genes: At3g58975 and At3g58980.</text>
</comment>
<evidence type="ECO:0000305" key="1"/>
<keyword id="KW-1185">Reference proteome</keyword>
<name>Y3975_ARATH</name>